<protein>
    <recommendedName>
        <fullName evidence="1">Endonuclease V</fullName>
        <ecNumber evidence="1">3.1.21.7</ecNumber>
    </recommendedName>
    <alternativeName>
        <fullName evidence="1">Deoxyinosine 3'endonuclease</fullName>
    </alternativeName>
    <alternativeName>
        <fullName evidence="1">Deoxyribonuclease V</fullName>
        <shortName evidence="1">DNase V</shortName>
    </alternativeName>
</protein>
<sequence length="223" mass="24673">MDLASLRAQQIELASSVIREDRLDKDPPDLIAGADVGFEQGGEVTRAAMVLLKYPSLELVEYKVARIATTMPYIPGFLSFREYPALLAAWEMLSQKPDLVFVDGHGISHPRRLGVASHFGLLVDVPTIGVAKKRLCGKFEPLSSEPGALAPLMDKGEQLAWVWRSKARCNPLFIATGHRVSVDSALAWVQRCMKGYRLPEPTRWADAVASERPAFVRYTANQP</sequence>
<evidence type="ECO:0000255" key="1">
    <source>
        <dbReference type="HAMAP-Rule" id="MF_00801"/>
    </source>
</evidence>
<gene>
    <name evidence="1" type="primary">nfi</name>
    <name type="ordered locus">ECH74115_5467</name>
</gene>
<accession>B5Z094</accession>
<proteinExistence type="inferred from homology"/>
<keyword id="KW-0963">Cytoplasm</keyword>
<keyword id="KW-0227">DNA damage</keyword>
<keyword id="KW-0234">DNA repair</keyword>
<keyword id="KW-0255">Endonuclease</keyword>
<keyword id="KW-0378">Hydrolase</keyword>
<keyword id="KW-0460">Magnesium</keyword>
<keyword id="KW-0479">Metal-binding</keyword>
<keyword id="KW-0540">Nuclease</keyword>
<comment type="function">
    <text evidence="1">DNA repair enzyme involved in the repair of deaminated bases. Selectively cleaves double-stranded DNA at the second phosphodiester bond 3' to a deoxyinosine leaving behind the intact lesion on the nicked DNA.</text>
</comment>
<comment type="catalytic activity">
    <reaction evidence="1">
        <text>Endonucleolytic cleavage at apurinic or apyrimidinic sites to products with a 5'-phosphate.</text>
        <dbReference type="EC" id="3.1.21.7"/>
    </reaction>
</comment>
<comment type="cofactor">
    <cofactor evidence="1">
        <name>Mg(2+)</name>
        <dbReference type="ChEBI" id="CHEBI:18420"/>
    </cofactor>
</comment>
<comment type="subcellular location">
    <subcellularLocation>
        <location evidence="1">Cytoplasm</location>
    </subcellularLocation>
</comment>
<comment type="similarity">
    <text evidence="1">Belongs to the endonuclease V family.</text>
</comment>
<reference key="1">
    <citation type="journal article" date="2011" name="Proc. Natl. Acad. Sci. U.S.A.">
        <title>Genomic anatomy of Escherichia coli O157:H7 outbreaks.</title>
        <authorList>
            <person name="Eppinger M."/>
            <person name="Mammel M.K."/>
            <person name="Leclerc J.E."/>
            <person name="Ravel J."/>
            <person name="Cebula T.A."/>
        </authorList>
    </citation>
    <scope>NUCLEOTIDE SEQUENCE [LARGE SCALE GENOMIC DNA]</scope>
    <source>
        <strain>EC4115 / EHEC</strain>
    </source>
</reference>
<name>NFI_ECO5E</name>
<dbReference type="EC" id="3.1.21.7" evidence="1"/>
<dbReference type="EMBL" id="CP001164">
    <property type="protein sequence ID" value="ACI34956.1"/>
    <property type="molecule type" value="Genomic_DNA"/>
</dbReference>
<dbReference type="RefSeq" id="WP_000362388.1">
    <property type="nucleotide sequence ID" value="NC_011353.1"/>
</dbReference>
<dbReference type="SMR" id="B5Z094"/>
<dbReference type="GeneID" id="75169444"/>
<dbReference type="KEGG" id="ecf:ECH74115_5467"/>
<dbReference type="HOGENOM" id="CLU_047631_1_0_6"/>
<dbReference type="GO" id="GO:0005737">
    <property type="term" value="C:cytoplasm"/>
    <property type="evidence" value="ECO:0007669"/>
    <property type="project" value="UniProtKB-SubCell"/>
</dbReference>
<dbReference type="GO" id="GO:0043737">
    <property type="term" value="F:deoxyribonuclease V activity"/>
    <property type="evidence" value="ECO:0007669"/>
    <property type="project" value="UniProtKB-UniRule"/>
</dbReference>
<dbReference type="GO" id="GO:0000287">
    <property type="term" value="F:magnesium ion binding"/>
    <property type="evidence" value="ECO:0007669"/>
    <property type="project" value="UniProtKB-UniRule"/>
</dbReference>
<dbReference type="GO" id="GO:0016891">
    <property type="term" value="F:RNA endonuclease activity, producing 5'-phosphomonoesters"/>
    <property type="evidence" value="ECO:0007669"/>
    <property type="project" value="TreeGrafter"/>
</dbReference>
<dbReference type="GO" id="GO:0003727">
    <property type="term" value="F:single-stranded RNA binding"/>
    <property type="evidence" value="ECO:0007669"/>
    <property type="project" value="TreeGrafter"/>
</dbReference>
<dbReference type="GO" id="GO:0006281">
    <property type="term" value="P:DNA repair"/>
    <property type="evidence" value="ECO:0007669"/>
    <property type="project" value="UniProtKB-UniRule"/>
</dbReference>
<dbReference type="CDD" id="cd06559">
    <property type="entry name" value="Endonuclease_V"/>
    <property type="match status" value="1"/>
</dbReference>
<dbReference type="FunFam" id="3.30.2170.10:FF:000001">
    <property type="entry name" value="Endonuclease V"/>
    <property type="match status" value="1"/>
</dbReference>
<dbReference type="Gene3D" id="3.30.2170.10">
    <property type="entry name" value="archaeoglobus fulgidus dsm 4304 superfamily"/>
    <property type="match status" value="1"/>
</dbReference>
<dbReference type="HAMAP" id="MF_00801">
    <property type="entry name" value="Endonuclease_5"/>
    <property type="match status" value="1"/>
</dbReference>
<dbReference type="InterPro" id="IPR007581">
    <property type="entry name" value="Endonuclease-V"/>
</dbReference>
<dbReference type="NCBIfam" id="NF008629">
    <property type="entry name" value="PRK11617.1"/>
    <property type="match status" value="1"/>
</dbReference>
<dbReference type="PANTHER" id="PTHR28511">
    <property type="entry name" value="ENDONUCLEASE V"/>
    <property type="match status" value="1"/>
</dbReference>
<dbReference type="PANTHER" id="PTHR28511:SF1">
    <property type="entry name" value="ENDONUCLEASE V"/>
    <property type="match status" value="1"/>
</dbReference>
<dbReference type="Pfam" id="PF04493">
    <property type="entry name" value="Endonuclease_5"/>
    <property type="match status" value="1"/>
</dbReference>
<feature type="chain" id="PRO_1000133871" description="Endonuclease V">
    <location>
        <begin position="1"/>
        <end position="223"/>
    </location>
</feature>
<feature type="binding site" evidence="1">
    <location>
        <position position="35"/>
    </location>
    <ligand>
        <name>Mg(2+)</name>
        <dbReference type="ChEBI" id="CHEBI:18420"/>
    </ligand>
</feature>
<feature type="binding site" evidence="1">
    <location>
        <position position="103"/>
    </location>
    <ligand>
        <name>Mg(2+)</name>
        <dbReference type="ChEBI" id="CHEBI:18420"/>
    </ligand>
</feature>
<feature type="site" description="Interaction with target DNA" evidence="1">
    <location>
        <position position="73"/>
    </location>
</feature>
<organism>
    <name type="scientific">Escherichia coli O157:H7 (strain EC4115 / EHEC)</name>
    <dbReference type="NCBI Taxonomy" id="444450"/>
    <lineage>
        <taxon>Bacteria</taxon>
        <taxon>Pseudomonadati</taxon>
        <taxon>Pseudomonadota</taxon>
        <taxon>Gammaproteobacteria</taxon>
        <taxon>Enterobacterales</taxon>
        <taxon>Enterobacteriaceae</taxon>
        <taxon>Escherichia</taxon>
    </lineage>
</organism>